<proteinExistence type="evidence at transcript level"/>
<feature type="chain" id="PRO_0000425243" description="Aldehyde oxidase 2">
    <location>
        <begin position="1"/>
        <end position="1335"/>
    </location>
</feature>
<feature type="domain" description="2Fe-2S ferredoxin-type" evidence="4">
    <location>
        <begin position="8"/>
        <end position="95"/>
    </location>
</feature>
<feature type="domain" description="FAD-binding PCMH-type" evidence="5">
    <location>
        <begin position="242"/>
        <end position="427"/>
    </location>
</feature>
<feature type="active site" description="Proton acceptor; for azaheterocycle hydroxylase activity" evidence="1">
    <location>
        <position position="1287"/>
    </location>
</feature>
<feature type="binding site" evidence="2">
    <location>
        <position position="47"/>
    </location>
    <ligand>
        <name>[2Fe-2S] cluster</name>
        <dbReference type="ChEBI" id="CHEBI:190135"/>
        <label>1</label>
    </ligand>
</feature>
<feature type="binding site" evidence="2">
    <location>
        <position position="52"/>
    </location>
    <ligand>
        <name>[2Fe-2S] cluster</name>
        <dbReference type="ChEBI" id="CHEBI:190135"/>
        <label>1</label>
    </ligand>
</feature>
<feature type="binding site" evidence="2">
    <location>
        <position position="55"/>
    </location>
    <ligand>
        <name>[2Fe-2S] cluster</name>
        <dbReference type="ChEBI" id="CHEBI:190135"/>
        <label>1</label>
    </ligand>
</feature>
<feature type="binding site" evidence="2">
    <location>
        <position position="77"/>
    </location>
    <ligand>
        <name>[2Fe-2S] cluster</name>
        <dbReference type="ChEBI" id="CHEBI:190135"/>
        <label>1</label>
    </ligand>
</feature>
<feature type="binding site" evidence="2">
    <location>
        <position position="116"/>
    </location>
    <ligand>
        <name>Mo-molybdopterin</name>
        <dbReference type="ChEBI" id="CHEBI:71302"/>
    </ligand>
</feature>
<feature type="binding site" evidence="2">
    <location>
        <position position="117"/>
    </location>
    <ligand>
        <name>[2Fe-2S] cluster</name>
        <dbReference type="ChEBI" id="CHEBI:190135"/>
        <label>2</label>
    </ligand>
</feature>
<feature type="binding site" evidence="2">
    <location>
        <position position="120"/>
    </location>
    <ligand>
        <name>[2Fe-2S] cluster</name>
        <dbReference type="ChEBI" id="CHEBI:190135"/>
        <label>2</label>
    </ligand>
</feature>
<feature type="binding site" evidence="2">
    <location>
        <position position="152"/>
    </location>
    <ligand>
        <name>[2Fe-2S] cluster</name>
        <dbReference type="ChEBI" id="CHEBI:190135"/>
        <label>2</label>
    </ligand>
</feature>
<feature type="binding site" evidence="2">
    <location>
        <position position="154"/>
    </location>
    <ligand>
        <name>[2Fe-2S] cluster</name>
        <dbReference type="ChEBI" id="CHEBI:190135"/>
        <label>2</label>
    </ligand>
</feature>
<feature type="binding site" evidence="2">
    <location>
        <position position="154"/>
    </location>
    <ligand>
        <name>Mo-molybdopterin</name>
        <dbReference type="ChEBI" id="CHEBI:71302"/>
    </ligand>
</feature>
<feature type="binding site" evidence="2">
    <location>
        <begin position="270"/>
        <end position="277"/>
    </location>
    <ligand>
        <name>FAD</name>
        <dbReference type="ChEBI" id="CHEBI:57692"/>
    </ligand>
</feature>
<feature type="binding site" evidence="2">
    <location>
        <position position="351"/>
    </location>
    <ligand>
        <name>FAD</name>
        <dbReference type="ChEBI" id="CHEBI:57692"/>
    </ligand>
</feature>
<feature type="binding site" evidence="2">
    <location>
        <position position="360"/>
    </location>
    <ligand>
        <name>FAD</name>
        <dbReference type="ChEBI" id="CHEBI:57692"/>
    </ligand>
</feature>
<feature type="binding site" evidence="2">
    <location>
        <position position="364"/>
    </location>
    <ligand>
        <name>FAD</name>
        <dbReference type="ChEBI" id="CHEBI:57692"/>
    </ligand>
</feature>
<feature type="binding site" evidence="2">
    <location>
        <position position="373"/>
    </location>
    <ligand>
        <name>FAD</name>
        <dbReference type="ChEBI" id="CHEBI:57692"/>
    </ligand>
</feature>
<feature type="binding site" evidence="2">
    <location>
        <position position="417"/>
    </location>
    <ligand>
        <name>FAD</name>
        <dbReference type="ChEBI" id="CHEBI:57692"/>
    </ligand>
</feature>
<feature type="binding site" evidence="2">
    <location>
        <begin position="821"/>
        <end position="822"/>
    </location>
    <ligand>
        <name>Mo-molybdopterin</name>
        <dbReference type="ChEBI" id="CHEBI:71302"/>
    </ligand>
</feature>
<feature type="binding site" evidence="2">
    <location>
        <begin position="1103"/>
        <end position="1106"/>
    </location>
    <ligand>
        <name>Mo-molybdopterin</name>
        <dbReference type="ChEBI" id="CHEBI:71302"/>
    </ligand>
</feature>
<feature type="binding site" evidence="2">
    <location>
        <position position="1218"/>
    </location>
    <ligand>
        <name>Mo-molybdopterin</name>
        <dbReference type="ChEBI" id="CHEBI:71302"/>
    </ligand>
</feature>
<feature type="binding site" evidence="2">
    <location>
        <position position="1285"/>
    </location>
    <ligand>
        <name>Mo-molybdopterin</name>
        <dbReference type="ChEBI" id="CHEBI:71302"/>
    </ligand>
</feature>
<feature type="sequence conflict" description="In Ref. 1; AFG18183." evidence="7" ref="1">
    <original>E</original>
    <variation>G</variation>
    <location>
        <position position="140"/>
    </location>
</feature>
<feature type="sequence conflict" description="In Ref. 1; AFG18183." evidence="7" ref="1">
    <original>D</original>
    <variation>N</variation>
    <location>
        <position position="854"/>
    </location>
</feature>
<feature type="sequence conflict" description="In Ref. 1; AFG18183." evidence="7" ref="1">
    <original>A</original>
    <variation>V</variation>
    <location>
        <position position="1074"/>
    </location>
</feature>
<feature type="sequence conflict" description="In Ref. 1; AFG18183." evidence="7" ref="1">
    <original>C</original>
    <variation>Y</variation>
    <location>
        <position position="1177"/>
    </location>
</feature>
<feature type="sequence conflict" description="In Ref. 1; AFG18183." evidence="7" ref="1">
    <original>D</original>
    <variation>G</variation>
    <location>
        <position position="1201"/>
    </location>
</feature>
<evidence type="ECO:0000250" key="1">
    <source>
        <dbReference type="UniProtKB" id="O54754"/>
    </source>
</evidence>
<evidence type="ECO:0000250" key="2">
    <source>
        <dbReference type="UniProtKB" id="Q06278"/>
    </source>
</evidence>
<evidence type="ECO:0000250" key="3">
    <source>
        <dbReference type="UniProtKB" id="Q5SGK3"/>
    </source>
</evidence>
<evidence type="ECO:0000255" key="4">
    <source>
        <dbReference type="PROSITE-ProRule" id="PRU00465"/>
    </source>
</evidence>
<evidence type="ECO:0000255" key="5">
    <source>
        <dbReference type="PROSITE-ProRule" id="PRU00718"/>
    </source>
</evidence>
<evidence type="ECO:0000269" key="6">
    <source>
    </source>
</evidence>
<evidence type="ECO:0000305" key="7"/>
<evidence type="ECO:0000305" key="8">
    <source>
    </source>
</evidence>
<gene>
    <name type="primary">AOX2</name>
    <name type="synonym">AOH3</name>
    <name type="synonym">AOX3L1</name>
</gene>
<dbReference type="EC" id="1.2.3.1"/>
<dbReference type="EC" id="1.17.3.-"/>
<dbReference type="EMBL" id="JQ280311">
    <property type="protein sequence ID" value="AFG18183.1"/>
    <property type="molecule type" value="mRNA"/>
</dbReference>
<dbReference type="EMBL" id="AAKN02051282">
    <property type="status" value="NOT_ANNOTATED_CDS"/>
    <property type="molecule type" value="Genomic_DNA"/>
</dbReference>
<dbReference type="EMBL" id="AAKN02051283">
    <property type="status" value="NOT_ANNOTATED_CDS"/>
    <property type="molecule type" value="Genomic_DNA"/>
</dbReference>
<dbReference type="RefSeq" id="NP_001265693.1">
    <property type="nucleotide sequence ID" value="NM_001278764.1"/>
</dbReference>
<dbReference type="SMR" id="H9TB19"/>
<dbReference type="FunCoup" id="H9TB19">
    <property type="interactions" value="360"/>
</dbReference>
<dbReference type="STRING" id="10141.ENSCPOP00000021010"/>
<dbReference type="GeneID" id="100719938"/>
<dbReference type="KEGG" id="cpoc:100719938"/>
<dbReference type="CTD" id="213043"/>
<dbReference type="InParanoid" id="H9TB19"/>
<dbReference type="OrthoDB" id="8300278at2759"/>
<dbReference type="Proteomes" id="UP000005447">
    <property type="component" value="Unassembled WGS sequence"/>
</dbReference>
<dbReference type="GO" id="GO:0005829">
    <property type="term" value="C:cytosol"/>
    <property type="evidence" value="ECO:0000250"/>
    <property type="project" value="UniProtKB"/>
</dbReference>
<dbReference type="GO" id="GO:0051537">
    <property type="term" value="F:2 iron, 2 sulfur cluster binding"/>
    <property type="evidence" value="ECO:0000250"/>
    <property type="project" value="UniProtKB"/>
</dbReference>
<dbReference type="GO" id="GO:0004031">
    <property type="term" value="F:aldehyde oxidase activity"/>
    <property type="evidence" value="ECO:0000250"/>
    <property type="project" value="UniProtKB"/>
</dbReference>
<dbReference type="GO" id="GO:0071949">
    <property type="term" value="F:FAD binding"/>
    <property type="evidence" value="ECO:0007669"/>
    <property type="project" value="InterPro"/>
</dbReference>
<dbReference type="GO" id="GO:0050660">
    <property type="term" value="F:flavin adenine dinucleotide binding"/>
    <property type="evidence" value="ECO:0000250"/>
    <property type="project" value="UniProtKB"/>
</dbReference>
<dbReference type="GO" id="GO:0005506">
    <property type="term" value="F:iron ion binding"/>
    <property type="evidence" value="ECO:0000250"/>
    <property type="project" value="UniProtKB"/>
</dbReference>
<dbReference type="GO" id="GO:0043546">
    <property type="term" value="F:molybdopterin cofactor binding"/>
    <property type="evidence" value="ECO:0000250"/>
    <property type="project" value="UniProtKB"/>
</dbReference>
<dbReference type="GO" id="GO:0042803">
    <property type="term" value="F:protein homodimerization activity"/>
    <property type="evidence" value="ECO:0000250"/>
    <property type="project" value="UniProtKB"/>
</dbReference>
<dbReference type="GO" id="GO:0006805">
    <property type="term" value="P:xenobiotic metabolic process"/>
    <property type="evidence" value="ECO:0000250"/>
    <property type="project" value="UniProtKB"/>
</dbReference>
<dbReference type="CDD" id="cd00207">
    <property type="entry name" value="fer2"/>
    <property type="match status" value="1"/>
</dbReference>
<dbReference type="FunFam" id="1.10.150.120:FF:000001">
    <property type="entry name" value="Aldehyde oxidase 1"/>
    <property type="match status" value="1"/>
</dbReference>
<dbReference type="FunFam" id="3.10.20.30:FF:000015">
    <property type="entry name" value="Aldehyde oxidase 1"/>
    <property type="match status" value="1"/>
</dbReference>
<dbReference type="FunFam" id="3.30.365.10:FF:000003">
    <property type="entry name" value="Aldehyde oxidase 1"/>
    <property type="match status" value="1"/>
</dbReference>
<dbReference type="FunFam" id="3.90.1170.50:FF:000001">
    <property type="entry name" value="Aldehyde oxidase 1"/>
    <property type="match status" value="1"/>
</dbReference>
<dbReference type="FunFam" id="3.30.365.10:FF:000025">
    <property type="entry name" value="Aldehyde oxidase 4"/>
    <property type="match status" value="1"/>
</dbReference>
<dbReference type="FunFam" id="3.30.365.10:FF:000001">
    <property type="entry name" value="Xanthine dehydrogenase oxidase"/>
    <property type="match status" value="1"/>
</dbReference>
<dbReference type="FunFam" id="3.30.365.10:FF:000004">
    <property type="entry name" value="Xanthine dehydrogenase oxidase"/>
    <property type="match status" value="1"/>
</dbReference>
<dbReference type="FunFam" id="3.30.390.50:FF:000001">
    <property type="entry name" value="Xanthine dehydrogenase oxidase"/>
    <property type="match status" value="1"/>
</dbReference>
<dbReference type="FunFam" id="3.30.43.10:FF:000001">
    <property type="entry name" value="Xanthine dehydrogenase/oxidase"/>
    <property type="match status" value="1"/>
</dbReference>
<dbReference type="FunFam" id="3.30.465.10:FF:000004">
    <property type="entry name" value="Xanthine dehydrogenase/oxidase"/>
    <property type="match status" value="1"/>
</dbReference>
<dbReference type="Gene3D" id="3.10.20.30">
    <property type="match status" value="1"/>
</dbReference>
<dbReference type="Gene3D" id="3.30.465.10">
    <property type="match status" value="1"/>
</dbReference>
<dbReference type="Gene3D" id="1.10.150.120">
    <property type="entry name" value="[2Fe-2S]-binding domain"/>
    <property type="match status" value="1"/>
</dbReference>
<dbReference type="Gene3D" id="3.90.1170.50">
    <property type="entry name" value="Aldehyde oxidase/xanthine dehydrogenase, a/b hammerhead"/>
    <property type="match status" value="1"/>
</dbReference>
<dbReference type="Gene3D" id="3.30.365.10">
    <property type="entry name" value="Aldehyde oxidase/xanthine dehydrogenase, molybdopterin binding domain"/>
    <property type="match status" value="4"/>
</dbReference>
<dbReference type="Gene3D" id="3.30.390.50">
    <property type="entry name" value="CO dehydrogenase flavoprotein, C-terminal domain"/>
    <property type="match status" value="1"/>
</dbReference>
<dbReference type="Gene3D" id="3.30.43.10">
    <property type="entry name" value="Uridine Diphospho-n-acetylenolpyruvylglucosamine Reductase, domain 2"/>
    <property type="match status" value="1"/>
</dbReference>
<dbReference type="InterPro" id="IPR002888">
    <property type="entry name" value="2Fe-2S-bd"/>
</dbReference>
<dbReference type="InterPro" id="IPR036884">
    <property type="entry name" value="2Fe-2S-bd_dom_sf"/>
</dbReference>
<dbReference type="InterPro" id="IPR036010">
    <property type="entry name" value="2Fe-2S_ferredoxin-like_sf"/>
</dbReference>
<dbReference type="InterPro" id="IPR001041">
    <property type="entry name" value="2Fe-2S_ferredoxin-type"/>
</dbReference>
<dbReference type="InterPro" id="IPR006058">
    <property type="entry name" value="2Fe2S_fd_BS"/>
</dbReference>
<dbReference type="InterPro" id="IPR000674">
    <property type="entry name" value="Ald_Oxase/Xan_DH_a/b"/>
</dbReference>
<dbReference type="InterPro" id="IPR036856">
    <property type="entry name" value="Ald_Oxase/Xan_DH_a/b_sf"/>
</dbReference>
<dbReference type="InterPro" id="IPR016208">
    <property type="entry name" value="Ald_Oxase/xanthine_DH-like"/>
</dbReference>
<dbReference type="InterPro" id="IPR008274">
    <property type="entry name" value="AldOxase/xan_DH_MoCoBD1"/>
</dbReference>
<dbReference type="InterPro" id="IPR046867">
    <property type="entry name" value="AldOxase/xan_DH_MoCoBD2"/>
</dbReference>
<dbReference type="InterPro" id="IPR037165">
    <property type="entry name" value="AldOxase/xan_DH_Mopterin-bd_sf"/>
</dbReference>
<dbReference type="InterPro" id="IPR012675">
    <property type="entry name" value="Beta-grasp_dom_sf"/>
</dbReference>
<dbReference type="InterPro" id="IPR005107">
    <property type="entry name" value="CO_DH_flav_C"/>
</dbReference>
<dbReference type="InterPro" id="IPR036683">
    <property type="entry name" value="CO_DH_flav_C_dom_sf"/>
</dbReference>
<dbReference type="InterPro" id="IPR016166">
    <property type="entry name" value="FAD-bd_PCMH"/>
</dbReference>
<dbReference type="InterPro" id="IPR036318">
    <property type="entry name" value="FAD-bd_PCMH-like_sf"/>
</dbReference>
<dbReference type="InterPro" id="IPR016167">
    <property type="entry name" value="FAD-bd_PCMH_sub1"/>
</dbReference>
<dbReference type="InterPro" id="IPR016169">
    <property type="entry name" value="FAD-bd_PCMH_sub2"/>
</dbReference>
<dbReference type="InterPro" id="IPR002346">
    <property type="entry name" value="Mopterin_DH_FAD-bd"/>
</dbReference>
<dbReference type="PANTHER" id="PTHR45444">
    <property type="entry name" value="XANTHINE DEHYDROGENASE"/>
    <property type="match status" value="1"/>
</dbReference>
<dbReference type="PANTHER" id="PTHR45444:SF3">
    <property type="entry name" value="XANTHINE DEHYDROGENASE"/>
    <property type="match status" value="1"/>
</dbReference>
<dbReference type="Pfam" id="PF01315">
    <property type="entry name" value="Ald_Xan_dh_C"/>
    <property type="match status" value="1"/>
</dbReference>
<dbReference type="Pfam" id="PF03450">
    <property type="entry name" value="CO_deh_flav_C"/>
    <property type="match status" value="1"/>
</dbReference>
<dbReference type="Pfam" id="PF00941">
    <property type="entry name" value="FAD_binding_5"/>
    <property type="match status" value="1"/>
</dbReference>
<dbReference type="Pfam" id="PF00111">
    <property type="entry name" value="Fer2"/>
    <property type="match status" value="1"/>
</dbReference>
<dbReference type="Pfam" id="PF01799">
    <property type="entry name" value="Fer2_2"/>
    <property type="match status" value="1"/>
</dbReference>
<dbReference type="Pfam" id="PF02738">
    <property type="entry name" value="MoCoBD_1"/>
    <property type="match status" value="1"/>
</dbReference>
<dbReference type="Pfam" id="PF20256">
    <property type="entry name" value="MoCoBD_2"/>
    <property type="match status" value="1"/>
</dbReference>
<dbReference type="PIRSF" id="PIRSF000127">
    <property type="entry name" value="Xanthine_DH"/>
    <property type="match status" value="1"/>
</dbReference>
<dbReference type="SMART" id="SM01008">
    <property type="entry name" value="Ald_Xan_dh_C"/>
    <property type="match status" value="1"/>
</dbReference>
<dbReference type="SMART" id="SM01092">
    <property type="entry name" value="CO_deh_flav_C"/>
    <property type="match status" value="1"/>
</dbReference>
<dbReference type="SUPFAM" id="SSF54292">
    <property type="entry name" value="2Fe-2S ferredoxin-like"/>
    <property type="match status" value="1"/>
</dbReference>
<dbReference type="SUPFAM" id="SSF55447">
    <property type="entry name" value="CO dehydrogenase flavoprotein C-terminal domain-like"/>
    <property type="match status" value="1"/>
</dbReference>
<dbReference type="SUPFAM" id="SSF47741">
    <property type="entry name" value="CO dehydrogenase ISP C-domain like"/>
    <property type="match status" value="1"/>
</dbReference>
<dbReference type="SUPFAM" id="SSF54665">
    <property type="entry name" value="CO dehydrogenase molybdoprotein N-domain-like"/>
    <property type="match status" value="1"/>
</dbReference>
<dbReference type="SUPFAM" id="SSF56176">
    <property type="entry name" value="FAD-binding/transporter-associated domain-like"/>
    <property type="match status" value="1"/>
</dbReference>
<dbReference type="SUPFAM" id="SSF56003">
    <property type="entry name" value="Molybdenum cofactor-binding domain"/>
    <property type="match status" value="1"/>
</dbReference>
<dbReference type="PROSITE" id="PS00197">
    <property type="entry name" value="2FE2S_FER_1"/>
    <property type="match status" value="1"/>
</dbReference>
<dbReference type="PROSITE" id="PS51085">
    <property type="entry name" value="2FE2S_FER_2"/>
    <property type="match status" value="1"/>
</dbReference>
<dbReference type="PROSITE" id="PS51387">
    <property type="entry name" value="FAD_PCMH"/>
    <property type="match status" value="1"/>
</dbReference>
<accession>H9TB19</accession>
<organism>
    <name type="scientific">Cavia porcellus</name>
    <name type="common">Guinea pig</name>
    <dbReference type="NCBI Taxonomy" id="10141"/>
    <lineage>
        <taxon>Eukaryota</taxon>
        <taxon>Metazoa</taxon>
        <taxon>Chordata</taxon>
        <taxon>Craniata</taxon>
        <taxon>Vertebrata</taxon>
        <taxon>Euteleostomi</taxon>
        <taxon>Mammalia</taxon>
        <taxon>Eutheria</taxon>
        <taxon>Euarchontoglires</taxon>
        <taxon>Glires</taxon>
        <taxon>Rodentia</taxon>
        <taxon>Hystricomorpha</taxon>
        <taxon>Caviidae</taxon>
        <taxon>Cavia</taxon>
    </lineage>
</organism>
<reference key="1">
    <citation type="journal article" date="2013" name="Cell. Mol. Life Sci.">
        <title>Structure and evolution of vertebrate aldehyde oxidases: from gene duplication to gene suppression.</title>
        <authorList>
            <person name="Kurosaki M."/>
            <person name="Bolis M."/>
            <person name="Fratelli M."/>
            <person name="Barzago M.M."/>
            <person name="Pattini L."/>
            <person name="Perretta G."/>
            <person name="Terao M."/>
            <person name="Garattini E."/>
        </authorList>
    </citation>
    <scope>NUCLEOTIDE SEQUENCE [MRNA]</scope>
    <scope>TISSUE SPECIFICITY</scope>
    <scope>IDENTIFICATION OF PARALOGS</scope>
</reference>
<reference key="2">
    <citation type="journal article" date="2011" name="Nature">
        <title>A high-resolution map of human evolutionary constraint using 29 mammals.</title>
        <authorList>
            <person name="Lindblad-Toh K."/>
            <person name="Garber M."/>
            <person name="Zuk O."/>
            <person name="Lin M.F."/>
            <person name="Parker B.J."/>
            <person name="Washietl S."/>
            <person name="Kheradpour P."/>
            <person name="Ernst J."/>
            <person name="Jordan G."/>
            <person name="Mauceli E."/>
            <person name="Ward L.D."/>
            <person name="Lowe C.B."/>
            <person name="Holloway A.K."/>
            <person name="Clamp M."/>
            <person name="Gnerre S."/>
            <person name="Alfoldi J."/>
            <person name="Beal K."/>
            <person name="Chang J."/>
            <person name="Clawson H."/>
            <person name="Cuff J."/>
            <person name="Di Palma F."/>
            <person name="Fitzgerald S."/>
            <person name="Flicek P."/>
            <person name="Guttman M."/>
            <person name="Hubisz M.J."/>
            <person name="Jaffe D.B."/>
            <person name="Jungreis I."/>
            <person name="Kent W.J."/>
            <person name="Kostka D."/>
            <person name="Lara M."/>
            <person name="Martins A.L."/>
            <person name="Massingham T."/>
            <person name="Moltke I."/>
            <person name="Raney B.J."/>
            <person name="Rasmussen M.D."/>
            <person name="Robinson J."/>
            <person name="Stark A."/>
            <person name="Vilella A.J."/>
            <person name="Wen J."/>
            <person name="Xie X."/>
            <person name="Zody M.C."/>
            <person name="Baldwin J."/>
            <person name="Bloom T."/>
            <person name="Chin C.W."/>
            <person name="Heiman D."/>
            <person name="Nicol R."/>
            <person name="Nusbaum C."/>
            <person name="Young S."/>
            <person name="Wilkinson J."/>
            <person name="Worley K.C."/>
            <person name="Kovar C.L."/>
            <person name="Muzny D.M."/>
            <person name="Gibbs R.A."/>
            <person name="Cree A."/>
            <person name="Dihn H.H."/>
            <person name="Fowler G."/>
            <person name="Jhangiani S."/>
            <person name="Joshi V."/>
            <person name="Lee S."/>
            <person name="Lewis L.R."/>
            <person name="Nazareth L.V."/>
            <person name="Okwuonu G."/>
            <person name="Santibanez J."/>
            <person name="Warren W.C."/>
            <person name="Mardis E.R."/>
            <person name="Weinstock G.M."/>
            <person name="Wilson R.K."/>
            <person name="Delehaunty K."/>
            <person name="Dooling D."/>
            <person name="Fronik C."/>
            <person name="Fulton L."/>
            <person name="Fulton B."/>
            <person name="Graves T."/>
            <person name="Minx P."/>
            <person name="Sodergren E."/>
            <person name="Birney E."/>
            <person name="Margulies E.H."/>
            <person name="Herrero J."/>
            <person name="Green E.D."/>
            <person name="Haussler D."/>
            <person name="Siepel A."/>
            <person name="Goldman N."/>
            <person name="Pollard K.S."/>
            <person name="Pedersen J.S."/>
            <person name="Lander E.S."/>
            <person name="Kellis M."/>
        </authorList>
    </citation>
    <scope>NUCLEOTIDE SEQUENCE [LARGE SCALE GENOMIC DNA]</scope>
    <source>
        <strain>2N</strain>
    </source>
</reference>
<keyword id="KW-0001">2Fe-2S</keyword>
<keyword id="KW-0963">Cytoplasm</keyword>
<keyword id="KW-0274">FAD</keyword>
<keyword id="KW-0285">Flavoprotein</keyword>
<keyword id="KW-0408">Iron</keyword>
<keyword id="KW-0411">Iron-sulfur</keyword>
<keyword id="KW-0479">Metal-binding</keyword>
<keyword id="KW-0500">Molybdenum</keyword>
<keyword id="KW-0560">Oxidoreductase</keyword>
<keyword id="KW-1185">Reference proteome</keyword>
<comment type="function">
    <text evidence="3">Oxidase with broad substrate specificity, oxidizing aromatic azaheterocycles, such as phthalazine, as well as aldehydes, such as benzaldehyde and retinal.</text>
</comment>
<comment type="catalytic activity">
    <reaction>
        <text>an aldehyde + O2 + H2O = a carboxylate + H2O2 + H(+)</text>
        <dbReference type="Rhea" id="RHEA:16829"/>
        <dbReference type="ChEBI" id="CHEBI:15377"/>
        <dbReference type="ChEBI" id="CHEBI:15378"/>
        <dbReference type="ChEBI" id="CHEBI:15379"/>
        <dbReference type="ChEBI" id="CHEBI:16240"/>
        <dbReference type="ChEBI" id="CHEBI:17478"/>
        <dbReference type="ChEBI" id="CHEBI:29067"/>
        <dbReference type="EC" id="1.2.3.1"/>
    </reaction>
</comment>
<comment type="cofactor">
    <cofactor evidence="1">
        <name>[2Fe-2S] cluster</name>
        <dbReference type="ChEBI" id="CHEBI:190135"/>
    </cofactor>
    <text evidence="1">Binds 2 [2Fe-2S] clusters per subunit.</text>
</comment>
<comment type="cofactor">
    <cofactor evidence="1">
        <name>FAD</name>
        <dbReference type="ChEBI" id="CHEBI:57692"/>
    </cofactor>
    <text evidence="1">Binds 1 FAD per subunit.</text>
</comment>
<comment type="cofactor">
    <cofactor evidence="1">
        <name>Mo-molybdopterin</name>
        <dbReference type="ChEBI" id="CHEBI:71302"/>
    </cofactor>
    <text evidence="1">Binds 1 Mo-molybdopterin (Mo-MPT) cofactor per subunit.</text>
</comment>
<comment type="subunit">
    <text evidence="1">Homodimer.</text>
</comment>
<comment type="subcellular location">
    <subcellularLocation>
        <location evidence="3">Cytoplasm</location>
    </subcellularLocation>
</comment>
<comment type="tissue specificity">
    <text evidence="6">Detected in kidney, Harderian gland and olfactory mucosa.</text>
</comment>
<comment type="miscellaneous">
    <text evidence="8">AOX genes evolved from a xanthine oxidoreductase ancestral precursor via a series of gene duplication and suppression/deletion events. Different animal species contain a different complement of AOX genes encoding an equivalent number of AOX isoenzymes. In mammals, the two extremes are represented by certain rodents such as mice and rats, which are endowed with 4 AOX genes, and by humans, whose genome is characterized by a single active gene (PubMed:23263164).</text>
</comment>
<comment type="similarity">
    <text evidence="7">Belongs to the xanthine dehydrogenase family.</text>
</comment>
<name>AOXB_CAVPO</name>
<protein>
    <recommendedName>
        <fullName>Aldehyde oxidase 2</fullName>
        <ecNumber>1.2.3.1</ecNumber>
    </recommendedName>
    <alternativeName>
        <fullName>Aldehyde oxidase homolog 3</fullName>
    </alternativeName>
    <alternativeName>
        <fullName>Azaheterocycle hydroxylase 2</fullName>
        <ecNumber>1.17.3.-</ecNumber>
    </alternativeName>
</protein>
<sequence>MPHPPGSDVLVFFVNGRKVTERDVDPEVTLLTYLRRNLGLTGTKSACGGGSCGTCTVMLSRFDLASRKPRHIAVTACLVPLCSLHGAAVTTVEGVGSIRTRVHPVQERIAKSHGTQCGFCTPGMVMSLYALLRSHPQPSEEQLLEALAGNLCRCTGYRPILESGRTFCLDSASCGQHGARQCCLDQPGDGTCPPGRNGPQAHMCSELIPRTEFQPWDPTQEPIFPPELMRMAESPVQPSLTFRGDRVTWVSPGSLQELLALRARHPEAPLVLGNTALGPAQRSQGRVHPLLISPARIPELSTVTETSDGLTIGASCSLAQLQDILAKSISQLPVEKTQTLRALAKALRSVAGLQVRNLASLGGHVMSLHSYSDLNPILAVGQAALHLRSEGGARLISLDEHFLAGVVSASLQPGEILESVHIPHSQKWEFVFSFRQAQAPQNASPHVSAGMRVRFTEGTDTIEDLSIAYGGVGTTTVMAPQACQRLLGRHWTEETLDEACRLVLGEVTIPGAAPGGRVEFRRTLLVSFLFRFYLQVLQELKAHRFLKPPCTPRTLSDTWKYPQLPDQTLGALEDVPIMVPRGVQMYERVDPQQPPQDPVGRSIMHLSGLKHATGEAVFCDDLPRVDKELFMALVTSTRPHAKIVSVDPAEALRLPGVVAIVTAEDIPGTNGTEDDKLLAVDKVLCVGQVICAVVAETDVQARQATGSVRVTYEDLEPVVLSIQDAIGHSSFLCPEKKLELGNTEEAFEDVDHILEGEVHVGGQEHFYMETQRVLVIPKVEDQELDIYASTQDPAHMQKTVSSTLNVPLNRVTCHVKRVGGGFGGKQGRSAMLGAIAAVGAIKTGRPVRLVLDRDEDMLITGGRHPLFGKYKVGFMDSGRIKALDIQCYINGGCVLDYSELVIEFLILKLENAYKIRNLRFRGRACRTNLPSNTAFRGFGFPQGALVIESCITAVAAKCGLLPEKVREKNMYRTVDKTIYKQAFSPEPLHRCWAECLEQADVPGRRALADAFNRQSPWRKRGIAVVPMKFSVGFAATSYHQAAALVHIYTDGSVLVTHGGNELGQGIHTKMLQVASRELRVPLCRLHIQETSTATVPNTVTTAASVGADVNGRAVQNACQTLLKRLEPIMKKNPEGTWEAWVEAAFEQRISLSATGYFRGYKAFMDWEKGEGEPFPYCVFGAACSEVEIDCLTGAHRKLRTDIVMDAGCSLNPALDIGQVEGAFLQGAGLYTTEELHYSPEGALLSGGPEEYKIPTAADVPEKLNVTLLPSAQAQTGLTIYSSKGLGESGMFLGSSVFFAIQDAVAAARRDRGLAEDFTVPREDPGTCKPWSISVA</sequence>